<dbReference type="EC" id="3.1.3.2"/>
<dbReference type="EMBL" id="Z33995">
    <property type="protein sequence ID" value="CAA83964.1"/>
    <property type="molecule type" value="Genomic_DNA"/>
</dbReference>
<dbReference type="EMBL" id="CR382122">
    <property type="protein sequence ID" value="CAH01935.1"/>
    <property type="molecule type" value="Genomic_DNA"/>
</dbReference>
<dbReference type="RefSeq" id="XP_451542.1">
    <property type="nucleotide sequence ID" value="XM_451542.1"/>
</dbReference>
<dbReference type="SMR" id="P52289"/>
<dbReference type="STRING" id="284590.P52289"/>
<dbReference type="GlyCosmos" id="P52289">
    <property type="glycosylation" value="9 sites, No reported glycans"/>
</dbReference>
<dbReference type="PaxDb" id="284590-P52289"/>
<dbReference type="KEGG" id="kla:KLLA0_B00286g"/>
<dbReference type="eggNOG" id="KOG1382">
    <property type="taxonomic scope" value="Eukaryota"/>
</dbReference>
<dbReference type="HOGENOM" id="CLU_020880_3_1_1"/>
<dbReference type="InParanoid" id="P52289"/>
<dbReference type="OMA" id="RGYSPFC"/>
<dbReference type="Proteomes" id="UP000000598">
    <property type="component" value="Chromosome B"/>
</dbReference>
<dbReference type="GO" id="GO:0005576">
    <property type="term" value="C:extracellular region"/>
    <property type="evidence" value="ECO:0007669"/>
    <property type="project" value="UniProtKB-SubCell"/>
</dbReference>
<dbReference type="GO" id="GO:0009277">
    <property type="term" value="C:fungal-type cell wall"/>
    <property type="evidence" value="ECO:0007669"/>
    <property type="project" value="TreeGrafter"/>
</dbReference>
<dbReference type="GO" id="GO:0003993">
    <property type="term" value="F:acid phosphatase activity"/>
    <property type="evidence" value="ECO:0007669"/>
    <property type="project" value="UniProtKB-EC"/>
</dbReference>
<dbReference type="CDD" id="cd07061">
    <property type="entry name" value="HP_HAP_like"/>
    <property type="match status" value="1"/>
</dbReference>
<dbReference type="Gene3D" id="3.40.50.1240">
    <property type="entry name" value="Phosphoglycerate mutase-like"/>
    <property type="match status" value="1"/>
</dbReference>
<dbReference type="InterPro" id="IPR033379">
    <property type="entry name" value="Acid_Pase_AS"/>
</dbReference>
<dbReference type="InterPro" id="IPR000560">
    <property type="entry name" value="His_Pase_clade-2"/>
</dbReference>
<dbReference type="InterPro" id="IPR029033">
    <property type="entry name" value="His_PPase_superfam"/>
</dbReference>
<dbReference type="InterPro" id="IPR016274">
    <property type="entry name" value="Histidine_acid_Pase_euk"/>
</dbReference>
<dbReference type="PANTHER" id="PTHR20963:SF18">
    <property type="entry name" value="ACID PHOSPHATASE PHO11-RELATED"/>
    <property type="match status" value="1"/>
</dbReference>
<dbReference type="PANTHER" id="PTHR20963">
    <property type="entry name" value="MULTIPLE INOSITOL POLYPHOSPHATE PHOSPHATASE-RELATED"/>
    <property type="match status" value="1"/>
</dbReference>
<dbReference type="Pfam" id="PF00328">
    <property type="entry name" value="His_Phos_2"/>
    <property type="match status" value="1"/>
</dbReference>
<dbReference type="PIRSF" id="PIRSF000894">
    <property type="entry name" value="Acid_phosphatase"/>
    <property type="match status" value="1"/>
</dbReference>
<dbReference type="SUPFAM" id="SSF53254">
    <property type="entry name" value="Phosphoglycerate mutase-like"/>
    <property type="match status" value="1"/>
</dbReference>
<dbReference type="PROSITE" id="PS00616">
    <property type="entry name" value="HIS_ACID_PHOSPHAT_1"/>
    <property type="match status" value="1"/>
</dbReference>
<dbReference type="PROSITE" id="PS00778">
    <property type="entry name" value="HIS_ACID_PHOSPHAT_2"/>
    <property type="match status" value="1"/>
</dbReference>
<comment type="catalytic activity">
    <reaction>
        <text>a phosphate monoester + H2O = an alcohol + phosphate</text>
        <dbReference type="Rhea" id="RHEA:15017"/>
        <dbReference type="ChEBI" id="CHEBI:15377"/>
        <dbReference type="ChEBI" id="CHEBI:30879"/>
        <dbReference type="ChEBI" id="CHEBI:43474"/>
        <dbReference type="ChEBI" id="CHEBI:67140"/>
        <dbReference type="EC" id="3.1.3.2"/>
    </reaction>
</comment>
<comment type="subcellular location">
    <subcellularLocation>
        <location>Secreted</location>
    </subcellularLocation>
</comment>
<comment type="induction">
    <text evidence="1">Repressed by inorganic phosphate.</text>
</comment>
<comment type="PTM">
    <text>Glycosylated during secretion across the membrane.</text>
</comment>
<comment type="similarity">
    <text evidence="3">Belongs to the histidine acid phosphatase family.</text>
</comment>
<gene>
    <name type="primary">PHO5</name>
    <name type="ordered locus">KLLA0B00286g</name>
</gene>
<feature type="signal peptide" evidence="2">
    <location>
        <begin position="1"/>
        <end position="16"/>
    </location>
</feature>
<feature type="chain" id="PRO_0000023955" description="Repressible acid phosphatase">
    <location>
        <begin position="17"/>
        <end position="469"/>
    </location>
</feature>
<feature type="active site" description="Nucleophile" evidence="1">
    <location>
        <position position="77"/>
    </location>
</feature>
<feature type="active site" description="Proton donor" evidence="1">
    <location>
        <position position="340"/>
    </location>
</feature>
<feature type="glycosylation site" description="N-linked (GlcNAc...) asparagine" evidence="2">
    <location>
        <position position="23"/>
    </location>
</feature>
<feature type="glycosylation site" description="N-linked (GlcNAc...) asparagine" evidence="2">
    <location>
        <position position="31"/>
    </location>
</feature>
<feature type="glycosylation site" description="N-linked (GlcNAc...) asparagine" evidence="2">
    <location>
        <position position="129"/>
    </location>
</feature>
<feature type="glycosylation site" description="N-linked (GlcNAc...) asparagine" evidence="2">
    <location>
        <position position="201"/>
    </location>
</feature>
<feature type="glycosylation site" description="N-linked (GlcNAc...) asparagine" evidence="2">
    <location>
        <position position="229"/>
    </location>
</feature>
<feature type="glycosylation site" description="N-linked (GlcNAc...) asparagine" evidence="2">
    <location>
        <position position="250"/>
    </location>
</feature>
<feature type="glycosylation site" description="N-linked (GlcNAc...) asparagine" evidence="2">
    <location>
        <position position="317"/>
    </location>
</feature>
<feature type="glycosylation site" description="N-linked (GlcNAc...) asparagine" evidence="2">
    <location>
        <position position="392"/>
    </location>
</feature>
<feature type="glycosylation site" description="N-linked (GlcNAc...) asparagine" evidence="2">
    <location>
        <position position="447"/>
    </location>
</feature>
<feature type="sequence conflict" description="In Ref. 1; CAA83964." evidence="3" ref="1">
    <original>S</original>
    <variation>G</variation>
    <location>
        <position position="7"/>
    </location>
</feature>
<feature type="sequence conflict" description="In Ref. 1; CAA83964." evidence="3" ref="1">
    <original>S</original>
    <variation>N</variation>
    <location>
        <position position="32"/>
    </location>
</feature>
<feature type="sequence conflict" description="In Ref. 1; CAA83964." evidence="3" ref="1">
    <original>P</original>
    <variation>S</variation>
    <location>
        <position position="41"/>
    </location>
</feature>
<feature type="sequence conflict" description="In Ref. 1; CAA83964." evidence="3" ref="1">
    <original>GPM</original>
    <variation>DPL</variation>
    <location>
        <begin position="106"/>
        <end position="108"/>
    </location>
</feature>
<proteinExistence type="inferred from homology"/>
<reference key="1">
    <citation type="thesis" date="1995" institute="University of Salamanca" country="Spain">
        <authorList>
            <person name="Ferminan E."/>
        </authorList>
    </citation>
    <scope>NUCLEOTIDE SEQUENCE [GENOMIC DNA]</scope>
    <source>
        <strain>ATCC 76492 / CBS 2359/152 / CLIB 210</strain>
    </source>
</reference>
<reference key="2">
    <citation type="journal article" date="2004" name="Nature">
        <title>Genome evolution in yeasts.</title>
        <authorList>
            <person name="Dujon B."/>
            <person name="Sherman D."/>
            <person name="Fischer G."/>
            <person name="Durrens P."/>
            <person name="Casaregola S."/>
            <person name="Lafontaine I."/>
            <person name="de Montigny J."/>
            <person name="Marck C."/>
            <person name="Neuveglise C."/>
            <person name="Talla E."/>
            <person name="Goffard N."/>
            <person name="Frangeul L."/>
            <person name="Aigle M."/>
            <person name="Anthouard V."/>
            <person name="Babour A."/>
            <person name="Barbe V."/>
            <person name="Barnay S."/>
            <person name="Blanchin S."/>
            <person name="Beckerich J.-M."/>
            <person name="Beyne E."/>
            <person name="Bleykasten C."/>
            <person name="Boisrame A."/>
            <person name="Boyer J."/>
            <person name="Cattolico L."/>
            <person name="Confanioleri F."/>
            <person name="de Daruvar A."/>
            <person name="Despons L."/>
            <person name="Fabre E."/>
            <person name="Fairhead C."/>
            <person name="Ferry-Dumazet H."/>
            <person name="Groppi A."/>
            <person name="Hantraye F."/>
            <person name="Hennequin C."/>
            <person name="Jauniaux N."/>
            <person name="Joyet P."/>
            <person name="Kachouri R."/>
            <person name="Kerrest A."/>
            <person name="Koszul R."/>
            <person name="Lemaire M."/>
            <person name="Lesur I."/>
            <person name="Ma L."/>
            <person name="Muller H."/>
            <person name="Nicaud J.-M."/>
            <person name="Nikolski M."/>
            <person name="Oztas S."/>
            <person name="Ozier-Kalogeropoulos O."/>
            <person name="Pellenz S."/>
            <person name="Potier S."/>
            <person name="Richard G.-F."/>
            <person name="Straub M.-L."/>
            <person name="Suleau A."/>
            <person name="Swennen D."/>
            <person name="Tekaia F."/>
            <person name="Wesolowski-Louvel M."/>
            <person name="Westhof E."/>
            <person name="Wirth B."/>
            <person name="Zeniou-Meyer M."/>
            <person name="Zivanovic Y."/>
            <person name="Bolotin-Fukuhara M."/>
            <person name="Thierry A."/>
            <person name="Bouchier C."/>
            <person name="Caudron B."/>
            <person name="Scarpelli C."/>
            <person name="Gaillardin C."/>
            <person name="Weissenbach J."/>
            <person name="Wincker P."/>
            <person name="Souciet J.-L."/>
        </authorList>
    </citation>
    <scope>NUCLEOTIDE SEQUENCE [LARGE SCALE GENOMIC DNA]</scope>
    <source>
        <strain>ATCC 8585 / CBS 2359 / DSM 70799 / NBRC 1267 / NRRL Y-1140 / WM37</strain>
    </source>
</reference>
<protein>
    <recommendedName>
        <fullName>Repressible acid phosphatase</fullName>
        <ecNumber>3.1.3.2</ecNumber>
    </recommendedName>
</protein>
<evidence type="ECO:0000250" key="1"/>
<evidence type="ECO:0000255" key="2"/>
<evidence type="ECO:0000305" key="3"/>
<accession>P52289</accession>
<accession>Q6CWZ7</accession>
<keyword id="KW-0325">Glycoprotein</keyword>
<keyword id="KW-0378">Hydrolase</keyword>
<keyword id="KW-1185">Reference proteome</keyword>
<keyword id="KW-0964">Secreted</keyword>
<keyword id="KW-0732">Signal</keyword>
<sequence length="469" mass="52505">MLSILLSLLSLSGTHAAPISKDNGTVCYALNSSTTDESIFPLLNGQGPHYDYPQSFGIPVEVPDQCTVEHVQMLARHGERYPTASKGKLMIALWDKLKEFQGQYNGPMEVFNDYEFFVSNTKYFDQLTNSTDVDPSNPYAGAKTAQHLGKYIAYNYGDLFSDSNPVFTSSSGRVHQTAKYVVSSLEEELDIQLDLQIIQENETSGANSLTPADSCMTYNGDLGDEYFENATLPYLTDIKNRWMKKNSNLNLTLEHDDIELLVDWCAFETNVKGSSAVCDLFERNDLVAYSYYANVNNFYRRGAGNPMSNPIGSVLVNASYNLLTQADELDNKVWLSFSHDTDIQQFISALGLIDNGVTEYSLDQVDFQNIQQLSWVTPMGGRIFTEKLKCGNASYVRYIINDVIIPVPGCTSGPGFSCPIEDFDDYITNRLNGIDYVSSCEVQQVSNTTELTFYWDYNEVEYNGPVSNK</sequence>
<name>PPA5_KLULA</name>
<organism>
    <name type="scientific">Kluyveromyces lactis (strain ATCC 8585 / CBS 2359 / DSM 70799 / NBRC 1267 / NRRL Y-1140 / WM37)</name>
    <name type="common">Yeast</name>
    <name type="synonym">Candida sphaerica</name>
    <dbReference type="NCBI Taxonomy" id="284590"/>
    <lineage>
        <taxon>Eukaryota</taxon>
        <taxon>Fungi</taxon>
        <taxon>Dikarya</taxon>
        <taxon>Ascomycota</taxon>
        <taxon>Saccharomycotina</taxon>
        <taxon>Saccharomycetes</taxon>
        <taxon>Saccharomycetales</taxon>
        <taxon>Saccharomycetaceae</taxon>
        <taxon>Kluyveromyces</taxon>
    </lineage>
</organism>